<gene>
    <name type="ORF">F46C5.1</name>
</gene>
<accession>P52880</accession>
<protein>
    <recommendedName>
        <fullName>Uncharacterized protein F46C5.1</fullName>
    </recommendedName>
</protein>
<keyword id="KW-0472">Membrane</keyword>
<keyword id="KW-1185">Reference proteome</keyword>
<keyword id="KW-0812">Transmembrane</keyword>
<keyword id="KW-1133">Transmembrane helix</keyword>
<sequence>MQSHFITTASILLVVIVAFCAAAPMIEEPKLEKPTNLEILFAKIVKKQNESKQHRLINFISRAMPGGVDAPIASMAEYETFKSDKSANFLSDGAGHVVFRQYRRARLSDILHNVNRRAGGV</sequence>
<proteinExistence type="predicted"/>
<reference key="1">
    <citation type="journal article" date="1998" name="Science">
        <title>Genome sequence of the nematode C. elegans: a platform for investigating biology.</title>
        <authorList>
            <consortium name="The C. elegans sequencing consortium"/>
        </authorList>
    </citation>
    <scope>NUCLEOTIDE SEQUENCE [LARGE SCALE GENOMIC DNA]</scope>
    <source>
        <strain>Bristol N2</strain>
    </source>
</reference>
<comment type="subcellular location">
    <subcellularLocation>
        <location evidence="2">Membrane</location>
        <topology evidence="2">Single-pass membrane protein</topology>
    </subcellularLocation>
</comment>
<name>YAF1_CAEEL</name>
<evidence type="ECO:0000255" key="1"/>
<evidence type="ECO:0000305" key="2"/>
<feature type="chain" id="PRO_0000065347" description="Uncharacterized protein F46C5.1">
    <location>
        <begin position="1"/>
        <end position="121"/>
    </location>
</feature>
<feature type="transmembrane region" description="Helical" evidence="1">
    <location>
        <begin position="6"/>
        <end position="26"/>
    </location>
</feature>
<organism>
    <name type="scientific">Caenorhabditis elegans</name>
    <dbReference type="NCBI Taxonomy" id="6239"/>
    <lineage>
        <taxon>Eukaryota</taxon>
        <taxon>Metazoa</taxon>
        <taxon>Ecdysozoa</taxon>
        <taxon>Nematoda</taxon>
        <taxon>Chromadorea</taxon>
        <taxon>Rhabditida</taxon>
        <taxon>Rhabditina</taxon>
        <taxon>Rhabditomorpha</taxon>
        <taxon>Rhabditoidea</taxon>
        <taxon>Rhabditidae</taxon>
        <taxon>Peloderinae</taxon>
        <taxon>Caenorhabditis</taxon>
    </lineage>
</organism>
<dbReference type="EMBL" id="Z54281">
    <property type="protein sequence ID" value="CAA91048.1"/>
    <property type="molecule type" value="Genomic_DNA"/>
</dbReference>
<dbReference type="PIR" id="T22303">
    <property type="entry name" value="T22303"/>
</dbReference>
<dbReference type="RefSeq" id="NP_495879.1">
    <property type="nucleotide sequence ID" value="NM_063478.6"/>
</dbReference>
<dbReference type="FunCoup" id="P52880">
    <property type="interactions" value="404"/>
</dbReference>
<dbReference type="STRING" id="6239.F46C5.1.1"/>
<dbReference type="PaxDb" id="6239-F46C5.1"/>
<dbReference type="PeptideAtlas" id="P52880"/>
<dbReference type="EnsemblMetazoa" id="F46C5.1.1">
    <property type="protein sequence ID" value="F46C5.1.1"/>
    <property type="gene ID" value="WBGene00009778"/>
</dbReference>
<dbReference type="GeneID" id="174411"/>
<dbReference type="KEGG" id="cel:CELE_F46C5.1"/>
<dbReference type="UCSC" id="F46C5.1">
    <property type="organism name" value="c. elegans"/>
</dbReference>
<dbReference type="AGR" id="WB:WBGene00009778"/>
<dbReference type="CTD" id="174411"/>
<dbReference type="WormBase" id="F46C5.1">
    <property type="protein sequence ID" value="CE03343"/>
    <property type="gene ID" value="WBGene00009778"/>
</dbReference>
<dbReference type="eggNOG" id="ENOG502THJC">
    <property type="taxonomic scope" value="Eukaryota"/>
</dbReference>
<dbReference type="GeneTree" id="ENSGT00940000176376"/>
<dbReference type="HOGENOM" id="CLU_2086919_0_0_1"/>
<dbReference type="InParanoid" id="P52880"/>
<dbReference type="OMA" id="QNESKQH"/>
<dbReference type="OrthoDB" id="5784527at2759"/>
<dbReference type="PRO" id="PR:P52880"/>
<dbReference type="Proteomes" id="UP000001940">
    <property type="component" value="Chromosome II"/>
</dbReference>
<dbReference type="Bgee" id="WBGene00009778">
    <property type="expression patterns" value="Expressed in larva and 2 other cell types or tissues"/>
</dbReference>
<dbReference type="GO" id="GO:0016020">
    <property type="term" value="C:membrane"/>
    <property type="evidence" value="ECO:0007669"/>
    <property type="project" value="UniProtKB-SubCell"/>
</dbReference>
<dbReference type="InterPro" id="IPR020376">
    <property type="entry name" value="Uncharacterised_F46C5.1"/>
</dbReference>
<dbReference type="Pfam" id="PF17351">
    <property type="entry name" value="DUF5380"/>
    <property type="match status" value="1"/>
</dbReference>